<accession>Q7VPK4</accession>
<organism>
    <name type="scientific">Haemophilus ducreyi (strain 35000HP / ATCC 700724)</name>
    <dbReference type="NCBI Taxonomy" id="233412"/>
    <lineage>
        <taxon>Bacteria</taxon>
        <taxon>Pseudomonadati</taxon>
        <taxon>Pseudomonadota</taxon>
        <taxon>Gammaproteobacteria</taxon>
        <taxon>Pasteurellales</taxon>
        <taxon>Pasteurellaceae</taxon>
        <taxon>Haemophilus</taxon>
    </lineage>
</organism>
<keyword id="KW-0004">4Fe-4S</keyword>
<keyword id="KW-0408">Iron</keyword>
<keyword id="KW-0411">Iron-sulfur</keyword>
<keyword id="KW-0414">Isoprene biosynthesis</keyword>
<keyword id="KW-0479">Metal-binding</keyword>
<keyword id="KW-0560">Oxidoreductase</keyword>
<keyword id="KW-1185">Reference proteome</keyword>
<proteinExistence type="inferred from homology"/>
<evidence type="ECO:0000255" key="1">
    <source>
        <dbReference type="HAMAP-Rule" id="MF_00191"/>
    </source>
</evidence>
<sequence>MNILLANPRGFCAGVDRAISIVELALEVHGAPIYVRHEVVHNRFVVDDLKAKGAIFVEELDEVPDSAIVIFSAHGVSQAVRQEAKRRGLKVFDATCPLVTKVHMQVARASKKGTKAILIGHQGHPEVIGTMGQYYNEQAGIFLVETVEDIANLPIHHHEDLTFMTQTTLSVDDTSGMIEALKNKYPAIQGPRKNDICYATTNRQQAVRELAKQAQLVLVVGSKNSSNSNRLAELASRMGVLAKLIDGPQDILPEWLDNVETIGITAGASAPEILVQSVVAHLQTLGATSVANLVGCEENMVFEVPKELRVREVK</sequence>
<gene>
    <name evidence="1" type="primary">ispH</name>
    <name type="ordered locus">HD_0064</name>
</gene>
<feature type="chain" id="PRO_0000128823" description="4-hydroxy-3-methylbut-2-enyl diphosphate reductase">
    <location>
        <begin position="1"/>
        <end position="314"/>
    </location>
</feature>
<feature type="active site" description="Proton donor" evidence="1">
    <location>
        <position position="126"/>
    </location>
</feature>
<feature type="binding site" evidence="1">
    <location>
        <position position="12"/>
    </location>
    <ligand>
        <name>[4Fe-4S] cluster</name>
        <dbReference type="ChEBI" id="CHEBI:49883"/>
    </ligand>
</feature>
<feature type="binding site" evidence="1">
    <location>
        <position position="41"/>
    </location>
    <ligand>
        <name>(2E)-4-hydroxy-3-methylbut-2-enyl diphosphate</name>
        <dbReference type="ChEBI" id="CHEBI:128753"/>
    </ligand>
</feature>
<feature type="binding site" evidence="1">
    <location>
        <position position="41"/>
    </location>
    <ligand>
        <name>dimethylallyl diphosphate</name>
        <dbReference type="ChEBI" id="CHEBI:57623"/>
    </ligand>
</feature>
<feature type="binding site" evidence="1">
    <location>
        <position position="41"/>
    </location>
    <ligand>
        <name>isopentenyl diphosphate</name>
        <dbReference type="ChEBI" id="CHEBI:128769"/>
    </ligand>
</feature>
<feature type="binding site" evidence="1">
    <location>
        <position position="74"/>
    </location>
    <ligand>
        <name>(2E)-4-hydroxy-3-methylbut-2-enyl diphosphate</name>
        <dbReference type="ChEBI" id="CHEBI:128753"/>
    </ligand>
</feature>
<feature type="binding site" evidence="1">
    <location>
        <position position="74"/>
    </location>
    <ligand>
        <name>dimethylallyl diphosphate</name>
        <dbReference type="ChEBI" id="CHEBI:57623"/>
    </ligand>
</feature>
<feature type="binding site" evidence="1">
    <location>
        <position position="74"/>
    </location>
    <ligand>
        <name>isopentenyl diphosphate</name>
        <dbReference type="ChEBI" id="CHEBI:128769"/>
    </ligand>
</feature>
<feature type="binding site" evidence="1">
    <location>
        <position position="96"/>
    </location>
    <ligand>
        <name>[4Fe-4S] cluster</name>
        <dbReference type="ChEBI" id="CHEBI:49883"/>
    </ligand>
</feature>
<feature type="binding site" evidence="1">
    <location>
        <position position="124"/>
    </location>
    <ligand>
        <name>(2E)-4-hydroxy-3-methylbut-2-enyl diphosphate</name>
        <dbReference type="ChEBI" id="CHEBI:128753"/>
    </ligand>
</feature>
<feature type="binding site" evidence="1">
    <location>
        <position position="124"/>
    </location>
    <ligand>
        <name>dimethylallyl diphosphate</name>
        <dbReference type="ChEBI" id="CHEBI:57623"/>
    </ligand>
</feature>
<feature type="binding site" evidence="1">
    <location>
        <position position="124"/>
    </location>
    <ligand>
        <name>isopentenyl diphosphate</name>
        <dbReference type="ChEBI" id="CHEBI:128769"/>
    </ligand>
</feature>
<feature type="binding site" evidence="1">
    <location>
        <position position="167"/>
    </location>
    <ligand>
        <name>(2E)-4-hydroxy-3-methylbut-2-enyl diphosphate</name>
        <dbReference type="ChEBI" id="CHEBI:128753"/>
    </ligand>
</feature>
<feature type="binding site" evidence="1">
    <location>
        <position position="197"/>
    </location>
    <ligand>
        <name>[4Fe-4S] cluster</name>
        <dbReference type="ChEBI" id="CHEBI:49883"/>
    </ligand>
</feature>
<feature type="binding site" evidence="1">
    <location>
        <position position="225"/>
    </location>
    <ligand>
        <name>(2E)-4-hydroxy-3-methylbut-2-enyl diphosphate</name>
        <dbReference type="ChEBI" id="CHEBI:128753"/>
    </ligand>
</feature>
<feature type="binding site" evidence="1">
    <location>
        <position position="225"/>
    </location>
    <ligand>
        <name>dimethylallyl diphosphate</name>
        <dbReference type="ChEBI" id="CHEBI:57623"/>
    </ligand>
</feature>
<feature type="binding site" evidence="1">
    <location>
        <position position="225"/>
    </location>
    <ligand>
        <name>isopentenyl diphosphate</name>
        <dbReference type="ChEBI" id="CHEBI:128769"/>
    </ligand>
</feature>
<feature type="binding site" evidence="1">
    <location>
        <position position="226"/>
    </location>
    <ligand>
        <name>(2E)-4-hydroxy-3-methylbut-2-enyl diphosphate</name>
        <dbReference type="ChEBI" id="CHEBI:128753"/>
    </ligand>
</feature>
<feature type="binding site" evidence="1">
    <location>
        <position position="226"/>
    </location>
    <ligand>
        <name>dimethylallyl diphosphate</name>
        <dbReference type="ChEBI" id="CHEBI:57623"/>
    </ligand>
</feature>
<feature type="binding site" evidence="1">
    <location>
        <position position="226"/>
    </location>
    <ligand>
        <name>isopentenyl diphosphate</name>
        <dbReference type="ChEBI" id="CHEBI:128769"/>
    </ligand>
</feature>
<feature type="binding site" evidence="1">
    <location>
        <position position="227"/>
    </location>
    <ligand>
        <name>(2E)-4-hydroxy-3-methylbut-2-enyl diphosphate</name>
        <dbReference type="ChEBI" id="CHEBI:128753"/>
    </ligand>
</feature>
<feature type="binding site" evidence="1">
    <location>
        <position position="227"/>
    </location>
    <ligand>
        <name>dimethylallyl diphosphate</name>
        <dbReference type="ChEBI" id="CHEBI:57623"/>
    </ligand>
</feature>
<feature type="binding site" evidence="1">
    <location>
        <position position="227"/>
    </location>
    <ligand>
        <name>isopentenyl diphosphate</name>
        <dbReference type="ChEBI" id="CHEBI:128769"/>
    </ligand>
</feature>
<feature type="binding site" evidence="1">
    <location>
        <position position="269"/>
    </location>
    <ligand>
        <name>(2E)-4-hydroxy-3-methylbut-2-enyl diphosphate</name>
        <dbReference type="ChEBI" id="CHEBI:128753"/>
    </ligand>
</feature>
<feature type="binding site" evidence="1">
    <location>
        <position position="269"/>
    </location>
    <ligand>
        <name>dimethylallyl diphosphate</name>
        <dbReference type="ChEBI" id="CHEBI:57623"/>
    </ligand>
</feature>
<feature type="binding site" evidence="1">
    <location>
        <position position="269"/>
    </location>
    <ligand>
        <name>isopentenyl diphosphate</name>
        <dbReference type="ChEBI" id="CHEBI:128769"/>
    </ligand>
</feature>
<name>ISPH_HAEDU</name>
<protein>
    <recommendedName>
        <fullName evidence="1">4-hydroxy-3-methylbut-2-enyl diphosphate reductase</fullName>
        <shortName evidence="1">HMBPP reductase</shortName>
        <ecNumber evidence="1">1.17.7.4</ecNumber>
    </recommendedName>
</protein>
<comment type="function">
    <text evidence="1">Catalyzes the conversion of 1-hydroxy-2-methyl-2-(E)-butenyl 4-diphosphate (HMBPP) into a mixture of isopentenyl diphosphate (IPP) and dimethylallyl diphosphate (DMAPP). Acts in the terminal step of the DOXP/MEP pathway for isoprenoid precursor biosynthesis.</text>
</comment>
<comment type="catalytic activity">
    <reaction evidence="1">
        <text>isopentenyl diphosphate + 2 oxidized [2Fe-2S]-[ferredoxin] + H2O = (2E)-4-hydroxy-3-methylbut-2-enyl diphosphate + 2 reduced [2Fe-2S]-[ferredoxin] + 2 H(+)</text>
        <dbReference type="Rhea" id="RHEA:24488"/>
        <dbReference type="Rhea" id="RHEA-COMP:10000"/>
        <dbReference type="Rhea" id="RHEA-COMP:10001"/>
        <dbReference type="ChEBI" id="CHEBI:15377"/>
        <dbReference type="ChEBI" id="CHEBI:15378"/>
        <dbReference type="ChEBI" id="CHEBI:33737"/>
        <dbReference type="ChEBI" id="CHEBI:33738"/>
        <dbReference type="ChEBI" id="CHEBI:128753"/>
        <dbReference type="ChEBI" id="CHEBI:128769"/>
        <dbReference type="EC" id="1.17.7.4"/>
    </reaction>
</comment>
<comment type="catalytic activity">
    <reaction evidence="1">
        <text>dimethylallyl diphosphate + 2 oxidized [2Fe-2S]-[ferredoxin] + H2O = (2E)-4-hydroxy-3-methylbut-2-enyl diphosphate + 2 reduced [2Fe-2S]-[ferredoxin] + 2 H(+)</text>
        <dbReference type="Rhea" id="RHEA:24825"/>
        <dbReference type="Rhea" id="RHEA-COMP:10000"/>
        <dbReference type="Rhea" id="RHEA-COMP:10001"/>
        <dbReference type="ChEBI" id="CHEBI:15377"/>
        <dbReference type="ChEBI" id="CHEBI:15378"/>
        <dbReference type="ChEBI" id="CHEBI:33737"/>
        <dbReference type="ChEBI" id="CHEBI:33738"/>
        <dbReference type="ChEBI" id="CHEBI:57623"/>
        <dbReference type="ChEBI" id="CHEBI:128753"/>
        <dbReference type="EC" id="1.17.7.4"/>
    </reaction>
</comment>
<comment type="cofactor">
    <cofactor evidence="1">
        <name>[4Fe-4S] cluster</name>
        <dbReference type="ChEBI" id="CHEBI:49883"/>
    </cofactor>
    <text evidence="1">Binds 1 [4Fe-4S] cluster per subunit.</text>
</comment>
<comment type="pathway">
    <text evidence="1">Isoprenoid biosynthesis; dimethylallyl diphosphate biosynthesis; dimethylallyl diphosphate from (2E)-4-hydroxy-3-methylbutenyl diphosphate: step 1/1.</text>
</comment>
<comment type="pathway">
    <text evidence="1">Isoprenoid biosynthesis; isopentenyl diphosphate biosynthesis via DXP pathway; isopentenyl diphosphate from 1-deoxy-D-xylulose 5-phosphate: step 6/6.</text>
</comment>
<comment type="similarity">
    <text evidence="1">Belongs to the IspH family.</text>
</comment>
<reference key="1">
    <citation type="submission" date="2003-06" db="EMBL/GenBank/DDBJ databases">
        <title>The complete genome sequence of Haemophilus ducreyi.</title>
        <authorList>
            <person name="Munson R.S. Jr."/>
            <person name="Ray W.C."/>
            <person name="Mahairas G."/>
            <person name="Sabo P."/>
            <person name="Mungur R."/>
            <person name="Johnson L."/>
            <person name="Nguyen D."/>
            <person name="Wang J."/>
            <person name="Forst C."/>
            <person name="Hood L."/>
        </authorList>
    </citation>
    <scope>NUCLEOTIDE SEQUENCE [LARGE SCALE GENOMIC DNA]</scope>
    <source>
        <strain>35000HP / ATCC 700724</strain>
    </source>
</reference>
<dbReference type="EC" id="1.17.7.4" evidence="1"/>
<dbReference type="EMBL" id="AE017143">
    <property type="protein sequence ID" value="AAP95076.1"/>
    <property type="molecule type" value="Genomic_DNA"/>
</dbReference>
<dbReference type="RefSeq" id="WP_010944130.1">
    <property type="nucleotide sequence ID" value="NC_002940.2"/>
</dbReference>
<dbReference type="SMR" id="Q7VPK4"/>
<dbReference type="STRING" id="233412.HD_0064"/>
<dbReference type="DNASU" id="1490089"/>
<dbReference type="KEGG" id="hdu:HD_0064"/>
<dbReference type="eggNOG" id="COG0761">
    <property type="taxonomic scope" value="Bacteria"/>
</dbReference>
<dbReference type="HOGENOM" id="CLU_027486_1_0_6"/>
<dbReference type="OrthoDB" id="9804068at2"/>
<dbReference type="UniPathway" id="UPA00056">
    <property type="reaction ID" value="UER00097"/>
</dbReference>
<dbReference type="UniPathway" id="UPA00059">
    <property type="reaction ID" value="UER00105"/>
</dbReference>
<dbReference type="Proteomes" id="UP000001022">
    <property type="component" value="Chromosome"/>
</dbReference>
<dbReference type="GO" id="GO:0051539">
    <property type="term" value="F:4 iron, 4 sulfur cluster binding"/>
    <property type="evidence" value="ECO:0007669"/>
    <property type="project" value="UniProtKB-UniRule"/>
</dbReference>
<dbReference type="GO" id="GO:0051745">
    <property type="term" value="F:4-hydroxy-3-methylbut-2-enyl diphosphate reductase activity"/>
    <property type="evidence" value="ECO:0007669"/>
    <property type="project" value="UniProtKB-UniRule"/>
</dbReference>
<dbReference type="GO" id="GO:0046872">
    <property type="term" value="F:metal ion binding"/>
    <property type="evidence" value="ECO:0007669"/>
    <property type="project" value="UniProtKB-KW"/>
</dbReference>
<dbReference type="GO" id="GO:0050992">
    <property type="term" value="P:dimethylallyl diphosphate biosynthetic process"/>
    <property type="evidence" value="ECO:0007669"/>
    <property type="project" value="UniProtKB-UniRule"/>
</dbReference>
<dbReference type="GO" id="GO:0019288">
    <property type="term" value="P:isopentenyl diphosphate biosynthetic process, methylerythritol 4-phosphate pathway"/>
    <property type="evidence" value="ECO:0007669"/>
    <property type="project" value="UniProtKB-UniRule"/>
</dbReference>
<dbReference type="GO" id="GO:0016114">
    <property type="term" value="P:terpenoid biosynthetic process"/>
    <property type="evidence" value="ECO:0007669"/>
    <property type="project" value="UniProtKB-UniRule"/>
</dbReference>
<dbReference type="CDD" id="cd13944">
    <property type="entry name" value="lytB_ispH"/>
    <property type="match status" value="1"/>
</dbReference>
<dbReference type="Gene3D" id="3.40.50.11270">
    <property type="match status" value="1"/>
</dbReference>
<dbReference type="Gene3D" id="3.40.1010.20">
    <property type="entry name" value="4-hydroxy-3-methylbut-2-enyl diphosphate reductase, catalytic domain"/>
    <property type="match status" value="2"/>
</dbReference>
<dbReference type="HAMAP" id="MF_00191">
    <property type="entry name" value="IspH"/>
    <property type="match status" value="1"/>
</dbReference>
<dbReference type="InterPro" id="IPR003451">
    <property type="entry name" value="LytB/IspH"/>
</dbReference>
<dbReference type="NCBIfam" id="TIGR00216">
    <property type="entry name" value="ispH_lytB"/>
    <property type="match status" value="1"/>
</dbReference>
<dbReference type="NCBIfam" id="NF002188">
    <property type="entry name" value="PRK01045.1-2"/>
    <property type="match status" value="1"/>
</dbReference>
<dbReference type="NCBIfam" id="NF002190">
    <property type="entry name" value="PRK01045.1-4"/>
    <property type="match status" value="1"/>
</dbReference>
<dbReference type="PANTHER" id="PTHR30426">
    <property type="entry name" value="4-HYDROXY-3-METHYLBUT-2-ENYL DIPHOSPHATE REDUCTASE"/>
    <property type="match status" value="1"/>
</dbReference>
<dbReference type="PANTHER" id="PTHR30426:SF0">
    <property type="entry name" value="4-HYDROXY-3-METHYLBUT-2-ENYL DIPHOSPHATE REDUCTASE"/>
    <property type="match status" value="1"/>
</dbReference>
<dbReference type="Pfam" id="PF02401">
    <property type="entry name" value="LYTB"/>
    <property type="match status" value="1"/>
</dbReference>